<gene>
    <name type="primary">PHT4;6</name>
    <name type="ordered locus">Os11g0186800</name>
    <name type="ordered locus">LOC_Os11g08370</name>
    <name type="ORF">OsJ_33231</name>
</gene>
<feature type="signal peptide" evidence="1">
    <location>
        <begin position="1"/>
        <end position="22"/>
    </location>
</feature>
<feature type="chain" id="PRO_0000383104" description="Probable anion transporter 6">
    <location>
        <begin position="23"/>
        <end position="428"/>
    </location>
</feature>
<feature type="transmembrane region" description="Helical" evidence="1">
    <location>
        <begin position="47"/>
        <end position="67"/>
    </location>
</feature>
<feature type="transmembrane region" description="Helical" evidence="1">
    <location>
        <begin position="74"/>
        <end position="94"/>
    </location>
</feature>
<feature type="transmembrane region" description="Helical" evidence="1">
    <location>
        <begin position="98"/>
        <end position="118"/>
    </location>
</feature>
<feature type="transmembrane region" description="Helical" evidence="1">
    <location>
        <begin position="137"/>
        <end position="157"/>
    </location>
</feature>
<feature type="transmembrane region" description="Helical" evidence="1">
    <location>
        <begin position="164"/>
        <end position="184"/>
    </location>
</feature>
<feature type="transmembrane region" description="Helical" evidence="1">
    <location>
        <begin position="221"/>
        <end position="241"/>
    </location>
</feature>
<feature type="transmembrane region" description="Helical" evidence="1">
    <location>
        <begin position="269"/>
        <end position="289"/>
    </location>
</feature>
<feature type="transmembrane region" description="Helical" evidence="1">
    <location>
        <begin position="301"/>
        <end position="321"/>
    </location>
</feature>
<feature type="transmembrane region" description="Helical" evidence="1">
    <location>
        <begin position="327"/>
        <end position="347"/>
    </location>
</feature>
<feature type="transmembrane region" description="Helical" evidence="1">
    <location>
        <begin position="356"/>
        <end position="376"/>
    </location>
</feature>
<feature type="transmembrane region" description="Helical" evidence="1">
    <location>
        <begin position="401"/>
        <end position="421"/>
    </location>
</feature>
<protein>
    <recommendedName>
        <fullName>Probable anion transporter 6</fullName>
    </recommendedName>
    <alternativeName>
        <fullName>Phosphate transporter 4;6</fullName>
    </alternativeName>
</protein>
<keyword id="KW-1003">Cell membrane</keyword>
<keyword id="KW-0406">Ion transport</keyword>
<keyword id="KW-0472">Membrane</keyword>
<keyword id="KW-1185">Reference proteome</keyword>
<keyword id="KW-0732">Signal</keyword>
<keyword id="KW-0812">Transmembrane</keyword>
<keyword id="KW-1133">Transmembrane helix</keyword>
<keyword id="KW-0813">Transport</keyword>
<organism>
    <name type="scientific">Oryza sativa subsp. japonica</name>
    <name type="common">Rice</name>
    <dbReference type="NCBI Taxonomy" id="39947"/>
    <lineage>
        <taxon>Eukaryota</taxon>
        <taxon>Viridiplantae</taxon>
        <taxon>Streptophyta</taxon>
        <taxon>Embryophyta</taxon>
        <taxon>Tracheophyta</taxon>
        <taxon>Spermatophyta</taxon>
        <taxon>Magnoliopsida</taxon>
        <taxon>Liliopsida</taxon>
        <taxon>Poales</taxon>
        <taxon>Poaceae</taxon>
        <taxon>BOP clade</taxon>
        <taxon>Oryzoideae</taxon>
        <taxon>Oryzeae</taxon>
        <taxon>Oryzinae</taxon>
        <taxon>Oryza</taxon>
        <taxon>Oryza sativa</taxon>
    </lineage>
</organism>
<evidence type="ECO:0000255" key="1"/>
<evidence type="ECO:0000305" key="2"/>
<comment type="function">
    <text>Probable anion transporter.</text>
</comment>
<comment type="subcellular location">
    <subcellularLocation>
        <location evidence="2">Cell membrane</location>
        <topology evidence="2">Multi-pass membrane protein</topology>
    </subcellularLocation>
</comment>
<comment type="similarity">
    <text evidence="2">Belongs to the major facilitator superfamily. Sodium/anion cotransporter (TC 2.A.1.14) family.</text>
</comment>
<sequence length="428" mass="46782">MKFPKRYAIVLLTFMCTNVCYIERVGFSIAYTVAADAVGTNQANKGMILSMFYYGYVLSQIPGGWAAQRLGGRLVLLLSFVLWSSICAVVPLDPNRVILLVLSRLLVGVAQGLIFPSIHTVLAQWVPPQERSRSVSLTTSGMYLGAACGMLLLPSLVKNMGPQSVFSVEAMLGVAWLLIWFKFASDPPRTDLPKVASKDKMKVQTGGIMAPRTVKIPWARILFSLPIWAIVVNNFTFHYALYVLMNWLPTYFKLGLQLSLQDMGFSKMLPYLNMFLFSNIGGVLADHLITRKILSVTKTRKLLNTVGFVVSAIALMALPLFRTPSGAIFCSSVSLGFLALGRAGFAVNHMDVAPKFAGIVMGISNTAGTLAGIVGVGLTGRILEAAKASNMDLTSSESWRTVFFVPGYLCIFSSFIFLIFSTGEKIFE</sequence>
<proteinExistence type="evidence at transcript level"/>
<name>PHT46_ORYSJ</name>
<dbReference type="EMBL" id="AC128644">
    <property type="protein sequence ID" value="AAX96345.1"/>
    <property type="molecule type" value="Genomic_DNA"/>
</dbReference>
<dbReference type="EMBL" id="DP000010">
    <property type="protein sequence ID" value="ABA91819.1"/>
    <property type="molecule type" value="Genomic_DNA"/>
</dbReference>
<dbReference type="EMBL" id="AP008217">
    <property type="protein sequence ID" value="BAF27769.1"/>
    <property type="molecule type" value="Genomic_DNA"/>
</dbReference>
<dbReference type="EMBL" id="AP014967">
    <property type="status" value="NOT_ANNOTATED_CDS"/>
    <property type="molecule type" value="Genomic_DNA"/>
</dbReference>
<dbReference type="EMBL" id="CM000148">
    <property type="protein sequence ID" value="EAZ17690.1"/>
    <property type="molecule type" value="Genomic_DNA"/>
</dbReference>
<dbReference type="EMBL" id="AK121325">
    <property type="protein sequence ID" value="BAH00429.1"/>
    <property type="molecule type" value="mRNA"/>
</dbReference>
<dbReference type="RefSeq" id="NP_001410104.1">
    <property type="nucleotide sequence ID" value="NM_001423175.1"/>
</dbReference>
<dbReference type="RefSeq" id="XP_015618009.1">
    <property type="nucleotide sequence ID" value="XM_015762523.1"/>
</dbReference>
<dbReference type="SMR" id="Q53P54"/>
<dbReference type="FunCoup" id="Q53P54">
    <property type="interactions" value="111"/>
</dbReference>
<dbReference type="STRING" id="39947.Q53P54"/>
<dbReference type="PaxDb" id="39947-Q53P54"/>
<dbReference type="GeneID" id="4349969"/>
<dbReference type="KEGG" id="dosa:Os11g0186800"/>
<dbReference type="eggNOG" id="KOG2532">
    <property type="taxonomic scope" value="Eukaryota"/>
</dbReference>
<dbReference type="HOGENOM" id="CLU_001265_5_11_1"/>
<dbReference type="InParanoid" id="Q53P54"/>
<dbReference type="OrthoDB" id="2985014at2759"/>
<dbReference type="Proteomes" id="UP000000763">
    <property type="component" value="Chromosome 11"/>
</dbReference>
<dbReference type="Proteomes" id="UP000007752">
    <property type="component" value="Chromosome 11"/>
</dbReference>
<dbReference type="Proteomes" id="UP000059680">
    <property type="component" value="Chromosome 11"/>
</dbReference>
<dbReference type="GO" id="GO:0005886">
    <property type="term" value="C:plasma membrane"/>
    <property type="evidence" value="ECO:0007669"/>
    <property type="project" value="UniProtKB-SubCell"/>
</dbReference>
<dbReference type="GO" id="GO:0005315">
    <property type="term" value="F:phosphate transmembrane transporter activity"/>
    <property type="evidence" value="ECO:0007669"/>
    <property type="project" value="UniProtKB-ARBA"/>
</dbReference>
<dbReference type="GO" id="GO:0006811">
    <property type="term" value="P:monoatomic ion transport"/>
    <property type="evidence" value="ECO:0007669"/>
    <property type="project" value="UniProtKB-KW"/>
</dbReference>
<dbReference type="CDD" id="cd17380">
    <property type="entry name" value="MFS_SLC17A9_like"/>
    <property type="match status" value="1"/>
</dbReference>
<dbReference type="FunFam" id="1.20.1250.20:FF:000199">
    <property type="entry name" value="Probable anion transporter 7"/>
    <property type="match status" value="1"/>
</dbReference>
<dbReference type="FunFam" id="1.20.1250.20:FF:000220">
    <property type="entry name" value="Probable anion transporter 7"/>
    <property type="match status" value="1"/>
</dbReference>
<dbReference type="Gene3D" id="1.20.1250.20">
    <property type="entry name" value="MFS general substrate transporter like domains"/>
    <property type="match status" value="2"/>
</dbReference>
<dbReference type="InterPro" id="IPR011701">
    <property type="entry name" value="MFS"/>
</dbReference>
<dbReference type="InterPro" id="IPR020846">
    <property type="entry name" value="MFS_dom"/>
</dbReference>
<dbReference type="InterPro" id="IPR050382">
    <property type="entry name" value="MFS_Na/Anion_cotransporter"/>
</dbReference>
<dbReference type="InterPro" id="IPR036259">
    <property type="entry name" value="MFS_trans_sf"/>
</dbReference>
<dbReference type="InterPro" id="IPR044777">
    <property type="entry name" value="SLC17A9-like"/>
</dbReference>
<dbReference type="PANTHER" id="PTHR11662:SF282">
    <property type="entry name" value="ANION TRANSPORTER 5-RELATED"/>
    <property type="match status" value="1"/>
</dbReference>
<dbReference type="PANTHER" id="PTHR11662">
    <property type="entry name" value="SOLUTE CARRIER FAMILY 17"/>
    <property type="match status" value="1"/>
</dbReference>
<dbReference type="Pfam" id="PF07690">
    <property type="entry name" value="MFS_1"/>
    <property type="match status" value="1"/>
</dbReference>
<dbReference type="SUPFAM" id="SSF103473">
    <property type="entry name" value="MFS general substrate transporter"/>
    <property type="match status" value="1"/>
</dbReference>
<dbReference type="PROSITE" id="PS50850">
    <property type="entry name" value="MFS"/>
    <property type="match status" value="1"/>
</dbReference>
<reference key="1">
    <citation type="journal article" date="2005" name="BMC Biol.">
        <title>The sequence of rice chromosomes 11 and 12, rich in disease resistance genes and recent gene duplications.</title>
        <authorList>
            <consortium name="The rice chromosomes 11 and 12 sequencing consortia"/>
        </authorList>
    </citation>
    <scope>NUCLEOTIDE SEQUENCE [LARGE SCALE GENOMIC DNA]</scope>
    <source>
        <strain>cv. Nipponbare</strain>
    </source>
</reference>
<reference key="2">
    <citation type="journal article" date="2005" name="Nature">
        <title>The map-based sequence of the rice genome.</title>
        <authorList>
            <consortium name="International rice genome sequencing project (IRGSP)"/>
        </authorList>
    </citation>
    <scope>NUCLEOTIDE SEQUENCE [LARGE SCALE GENOMIC DNA]</scope>
    <source>
        <strain>cv. Nipponbare</strain>
    </source>
</reference>
<reference key="3">
    <citation type="journal article" date="2008" name="Nucleic Acids Res.">
        <title>The rice annotation project database (RAP-DB): 2008 update.</title>
        <authorList>
            <consortium name="The rice annotation project (RAP)"/>
        </authorList>
    </citation>
    <scope>GENOME REANNOTATION</scope>
    <source>
        <strain>cv. Nipponbare</strain>
    </source>
</reference>
<reference key="4">
    <citation type="journal article" date="2013" name="Rice">
        <title>Improvement of the Oryza sativa Nipponbare reference genome using next generation sequence and optical map data.</title>
        <authorList>
            <person name="Kawahara Y."/>
            <person name="de la Bastide M."/>
            <person name="Hamilton J.P."/>
            <person name="Kanamori H."/>
            <person name="McCombie W.R."/>
            <person name="Ouyang S."/>
            <person name="Schwartz D.C."/>
            <person name="Tanaka T."/>
            <person name="Wu J."/>
            <person name="Zhou S."/>
            <person name="Childs K.L."/>
            <person name="Davidson R.M."/>
            <person name="Lin H."/>
            <person name="Quesada-Ocampo L."/>
            <person name="Vaillancourt B."/>
            <person name="Sakai H."/>
            <person name="Lee S.S."/>
            <person name="Kim J."/>
            <person name="Numa H."/>
            <person name="Itoh T."/>
            <person name="Buell C.R."/>
            <person name="Matsumoto T."/>
        </authorList>
    </citation>
    <scope>GENOME REANNOTATION</scope>
    <source>
        <strain>cv. Nipponbare</strain>
    </source>
</reference>
<reference key="5">
    <citation type="journal article" date="2005" name="PLoS Biol.">
        <title>The genomes of Oryza sativa: a history of duplications.</title>
        <authorList>
            <person name="Yu J."/>
            <person name="Wang J."/>
            <person name="Lin W."/>
            <person name="Li S."/>
            <person name="Li H."/>
            <person name="Zhou J."/>
            <person name="Ni P."/>
            <person name="Dong W."/>
            <person name="Hu S."/>
            <person name="Zeng C."/>
            <person name="Zhang J."/>
            <person name="Zhang Y."/>
            <person name="Li R."/>
            <person name="Xu Z."/>
            <person name="Li S."/>
            <person name="Li X."/>
            <person name="Zheng H."/>
            <person name="Cong L."/>
            <person name="Lin L."/>
            <person name="Yin J."/>
            <person name="Geng J."/>
            <person name="Li G."/>
            <person name="Shi J."/>
            <person name="Liu J."/>
            <person name="Lv H."/>
            <person name="Li J."/>
            <person name="Wang J."/>
            <person name="Deng Y."/>
            <person name="Ran L."/>
            <person name="Shi X."/>
            <person name="Wang X."/>
            <person name="Wu Q."/>
            <person name="Li C."/>
            <person name="Ren X."/>
            <person name="Wang J."/>
            <person name="Wang X."/>
            <person name="Li D."/>
            <person name="Liu D."/>
            <person name="Zhang X."/>
            <person name="Ji Z."/>
            <person name="Zhao W."/>
            <person name="Sun Y."/>
            <person name="Zhang Z."/>
            <person name="Bao J."/>
            <person name="Han Y."/>
            <person name="Dong L."/>
            <person name="Ji J."/>
            <person name="Chen P."/>
            <person name="Wu S."/>
            <person name="Liu J."/>
            <person name="Xiao Y."/>
            <person name="Bu D."/>
            <person name="Tan J."/>
            <person name="Yang L."/>
            <person name="Ye C."/>
            <person name="Zhang J."/>
            <person name="Xu J."/>
            <person name="Zhou Y."/>
            <person name="Yu Y."/>
            <person name="Zhang B."/>
            <person name="Zhuang S."/>
            <person name="Wei H."/>
            <person name="Liu B."/>
            <person name="Lei M."/>
            <person name="Yu H."/>
            <person name="Li Y."/>
            <person name="Xu H."/>
            <person name="Wei S."/>
            <person name="He X."/>
            <person name="Fang L."/>
            <person name="Zhang Z."/>
            <person name="Zhang Y."/>
            <person name="Huang X."/>
            <person name="Su Z."/>
            <person name="Tong W."/>
            <person name="Li J."/>
            <person name="Tong Z."/>
            <person name="Li S."/>
            <person name="Ye J."/>
            <person name="Wang L."/>
            <person name="Fang L."/>
            <person name="Lei T."/>
            <person name="Chen C.-S."/>
            <person name="Chen H.-C."/>
            <person name="Xu Z."/>
            <person name="Li H."/>
            <person name="Huang H."/>
            <person name="Zhang F."/>
            <person name="Xu H."/>
            <person name="Li N."/>
            <person name="Zhao C."/>
            <person name="Li S."/>
            <person name="Dong L."/>
            <person name="Huang Y."/>
            <person name="Li L."/>
            <person name="Xi Y."/>
            <person name="Qi Q."/>
            <person name="Li W."/>
            <person name="Zhang B."/>
            <person name="Hu W."/>
            <person name="Zhang Y."/>
            <person name="Tian X."/>
            <person name="Jiao Y."/>
            <person name="Liang X."/>
            <person name="Jin J."/>
            <person name="Gao L."/>
            <person name="Zheng W."/>
            <person name="Hao B."/>
            <person name="Liu S.-M."/>
            <person name="Wang W."/>
            <person name="Yuan L."/>
            <person name="Cao M."/>
            <person name="McDermott J."/>
            <person name="Samudrala R."/>
            <person name="Wang J."/>
            <person name="Wong G.K.-S."/>
            <person name="Yang H."/>
        </authorList>
    </citation>
    <scope>NUCLEOTIDE SEQUENCE [LARGE SCALE GENOMIC DNA]</scope>
    <source>
        <strain>cv. Nipponbare</strain>
    </source>
</reference>
<reference key="6">
    <citation type="journal article" date="2003" name="Science">
        <title>Collection, mapping, and annotation of over 28,000 cDNA clones from japonica rice.</title>
        <authorList>
            <consortium name="The rice full-length cDNA consortium"/>
        </authorList>
    </citation>
    <scope>NUCLEOTIDE SEQUENCE [LARGE SCALE MRNA]</scope>
    <source>
        <strain>cv. Nipponbare</strain>
    </source>
</reference>
<reference key="7">
    <citation type="journal article" date="2008" name="Plant Signal. Behav.">
        <title>Differential expression and phylogenetic analysis suggest specialization of plastid-localized members of the PHT4 phosphate transporter family for photosynthetic and heterotrophic tissues.</title>
        <authorList>
            <person name="Guo B."/>
            <person name="Irigoyen S."/>
            <person name="Fowler T.B."/>
            <person name="Versaw W.K."/>
        </authorList>
    </citation>
    <scope>GENE FAMILY</scope>
    <scope>NOMENCLATURE</scope>
</reference>
<accession>Q53P54</accession>